<dbReference type="EC" id="3.4.21.-" evidence="1"/>
<dbReference type="EMBL" id="GL573249">
    <property type="protein sequence ID" value="ELR10046.1"/>
    <property type="molecule type" value="Genomic_DNA"/>
</dbReference>
<dbReference type="RefSeq" id="XP_012742868.1">
    <property type="nucleotide sequence ID" value="XM_012887414.1"/>
</dbReference>
<dbReference type="SMR" id="L8GD75"/>
<dbReference type="STRING" id="658429.L8GD75"/>
<dbReference type="GlyCosmos" id="L8GD75">
    <property type="glycosylation" value="7 sites, No reported glycans"/>
</dbReference>
<dbReference type="VEuPathDB" id="FungiDB:GMDG_04447"/>
<dbReference type="HOGENOM" id="CLU_011263_1_4_1"/>
<dbReference type="InParanoid" id="L8GD75"/>
<dbReference type="OrthoDB" id="6210at34379"/>
<dbReference type="Proteomes" id="UP000011064">
    <property type="component" value="Unassembled WGS sequence"/>
</dbReference>
<dbReference type="GO" id="GO:0005576">
    <property type="term" value="C:extracellular region"/>
    <property type="evidence" value="ECO:0007669"/>
    <property type="project" value="UniProtKB-SubCell"/>
</dbReference>
<dbReference type="GO" id="GO:0004252">
    <property type="term" value="F:serine-type endopeptidase activity"/>
    <property type="evidence" value="ECO:0007669"/>
    <property type="project" value="InterPro"/>
</dbReference>
<dbReference type="GO" id="GO:0006508">
    <property type="term" value="P:proteolysis"/>
    <property type="evidence" value="ECO:0007669"/>
    <property type="project" value="UniProtKB-KW"/>
</dbReference>
<dbReference type="CDD" id="cd04077">
    <property type="entry name" value="Peptidases_S8_PCSK9_ProteinaseK_like"/>
    <property type="match status" value="1"/>
</dbReference>
<dbReference type="FunFam" id="3.40.50.200:FF:000007">
    <property type="entry name" value="Subtilisin-like serine protease"/>
    <property type="match status" value="1"/>
</dbReference>
<dbReference type="Gene3D" id="3.30.70.80">
    <property type="entry name" value="Peptidase S8 propeptide/proteinase inhibitor I9"/>
    <property type="match status" value="1"/>
</dbReference>
<dbReference type="Gene3D" id="3.40.50.200">
    <property type="entry name" value="Peptidase S8/S53 domain"/>
    <property type="match status" value="1"/>
</dbReference>
<dbReference type="InterPro" id="IPR034193">
    <property type="entry name" value="PCSK9_ProteinaseK-like"/>
</dbReference>
<dbReference type="InterPro" id="IPR000209">
    <property type="entry name" value="Peptidase_S8/S53_dom"/>
</dbReference>
<dbReference type="InterPro" id="IPR036852">
    <property type="entry name" value="Peptidase_S8/S53_dom_sf"/>
</dbReference>
<dbReference type="InterPro" id="IPR023827">
    <property type="entry name" value="Peptidase_S8_Asp-AS"/>
</dbReference>
<dbReference type="InterPro" id="IPR022398">
    <property type="entry name" value="Peptidase_S8_His-AS"/>
</dbReference>
<dbReference type="InterPro" id="IPR023828">
    <property type="entry name" value="Peptidase_S8_Ser-AS"/>
</dbReference>
<dbReference type="InterPro" id="IPR050131">
    <property type="entry name" value="Peptidase_S8_subtilisin-like"/>
</dbReference>
<dbReference type="InterPro" id="IPR015500">
    <property type="entry name" value="Peptidase_S8_subtilisin-rel"/>
</dbReference>
<dbReference type="InterPro" id="IPR010259">
    <property type="entry name" value="S8pro/Inhibitor_I9"/>
</dbReference>
<dbReference type="InterPro" id="IPR037045">
    <property type="entry name" value="S8pro/Inhibitor_I9_sf"/>
</dbReference>
<dbReference type="PANTHER" id="PTHR43806:SF11">
    <property type="entry name" value="CEREVISIN-RELATED"/>
    <property type="match status" value="1"/>
</dbReference>
<dbReference type="PANTHER" id="PTHR43806">
    <property type="entry name" value="PEPTIDASE S8"/>
    <property type="match status" value="1"/>
</dbReference>
<dbReference type="Pfam" id="PF05922">
    <property type="entry name" value="Inhibitor_I9"/>
    <property type="match status" value="1"/>
</dbReference>
<dbReference type="Pfam" id="PF00082">
    <property type="entry name" value="Peptidase_S8"/>
    <property type="match status" value="1"/>
</dbReference>
<dbReference type="PRINTS" id="PR00723">
    <property type="entry name" value="SUBTILISIN"/>
</dbReference>
<dbReference type="SUPFAM" id="SSF54897">
    <property type="entry name" value="Protease propeptides/inhibitors"/>
    <property type="match status" value="1"/>
</dbReference>
<dbReference type="SUPFAM" id="SSF52743">
    <property type="entry name" value="Subtilisin-like"/>
    <property type="match status" value="1"/>
</dbReference>
<dbReference type="PROSITE" id="PS51892">
    <property type="entry name" value="SUBTILASE"/>
    <property type="match status" value="1"/>
</dbReference>
<dbReference type="PROSITE" id="PS00136">
    <property type="entry name" value="SUBTILASE_ASP"/>
    <property type="match status" value="1"/>
</dbReference>
<dbReference type="PROSITE" id="PS00137">
    <property type="entry name" value="SUBTILASE_HIS"/>
    <property type="match status" value="1"/>
</dbReference>
<dbReference type="PROSITE" id="PS00138">
    <property type="entry name" value="SUBTILASE_SER"/>
    <property type="match status" value="1"/>
</dbReference>
<reference key="1">
    <citation type="submission" date="2010-09" db="EMBL/GenBank/DDBJ databases">
        <title>The genome sequence of Geomyces destructans 20631-21.</title>
        <authorList>
            <consortium name="The Broad Institute Genome Sequencing Platform"/>
            <person name="Cuomo C.A."/>
            <person name="Blehert D.S."/>
            <person name="Lorch J.M."/>
            <person name="Young S.K."/>
            <person name="Zeng Q."/>
            <person name="Gargeya S."/>
            <person name="Fitzgerald M."/>
            <person name="Haas B."/>
            <person name="Abouelleil A."/>
            <person name="Alvarado L."/>
            <person name="Arachchi H.M."/>
            <person name="Berlin A."/>
            <person name="Brown A."/>
            <person name="Chapman S.B."/>
            <person name="Chen Z."/>
            <person name="Dunbar C."/>
            <person name="Freedman E."/>
            <person name="Gearin G."/>
            <person name="Gellesch M."/>
            <person name="Goldberg J."/>
            <person name="Griggs A."/>
            <person name="Gujja S."/>
            <person name="Heiman D."/>
            <person name="Howarth C."/>
            <person name="Larson L."/>
            <person name="Lui A."/>
            <person name="MacDonald P.J.P."/>
            <person name="Montmayeur A."/>
            <person name="Murphy C."/>
            <person name="Neiman D."/>
            <person name="Pearson M."/>
            <person name="Priest M."/>
            <person name="Roberts A."/>
            <person name="Saif S."/>
            <person name="Shea T."/>
            <person name="Shenoy N."/>
            <person name="Sisk P."/>
            <person name="Stolte C."/>
            <person name="Sykes S."/>
            <person name="Wortman J."/>
            <person name="Nusbaum C."/>
            <person name="Birren B."/>
        </authorList>
    </citation>
    <scope>NUCLEOTIDE SEQUENCE [LARGE SCALE GENOMIC DNA]</scope>
    <source>
        <strain>ATCC MYA-4855 / 20631-21</strain>
    </source>
</reference>
<reference key="2">
    <citation type="journal article" date="2015" name="PLoS ONE">
        <title>Isolation and identification of an extracellular subtilisin-like serine protease secreted by the bat pathogen Pseudogymnoascus destructans.</title>
        <authorList>
            <person name="Pannkuk E.L."/>
            <person name="Risch T.S."/>
            <person name="Savary B.J."/>
        </authorList>
    </citation>
    <scope>GENE NAME</scope>
</reference>
<reference key="3">
    <citation type="journal article" date="2015" name="Proc. Natl. Acad. Sci. U.S.A.">
        <title>Destructin-1 is a collagen-degrading endopeptidase secreted by Pseudogymnoascus destructans, the causative agent of white-nose syndrome.</title>
        <authorList>
            <person name="O'Donoghue A.J."/>
            <person name="Knudsen G.M."/>
            <person name="Beekman C."/>
            <person name="Perry J.A."/>
            <person name="Johnson A.D."/>
            <person name="DeRisi J.L."/>
            <person name="Craik C.S."/>
            <person name="Bennett R.J."/>
        </authorList>
    </citation>
    <scope>SUBCELLULAR LOCATION</scope>
    <scope>IDENTIFICATION BY MASS SPECTROMETRY</scope>
</reference>
<reference key="4">
    <citation type="journal article" date="2015" name="Proc. Natl. Acad. Sci. U.S.A.">
        <authorList>
            <person name="O'Donoghue A.J."/>
            <person name="Knudsen G.M."/>
            <person name="Beekman C."/>
            <person name="Perry J.A."/>
            <person name="Johnson A.D."/>
            <person name="DeRisi J.L."/>
            <person name="Craik C.S."/>
            <person name="Bennett R.J."/>
        </authorList>
    </citation>
    <scope>ERRATUM OF PUBMED:25944934</scope>
</reference>
<comment type="function">
    <text evidence="1 2 6">Secreted subtilisin-like serine endopeptidase (PubMed:25944934). Mediates the degradation of collagen, the major structural protein in the mammalian host. Degrades the nonhelical regions of collagen that function in the cross-linking of the helical components (By similarity). May function as virulence factor involved in epidermal wing necrosis observed in white nose syndrome (WNS) in bats (By similarity).</text>
</comment>
<comment type="subcellular location">
    <subcellularLocation>
        <location evidence="6">Secreted</location>
    </subcellularLocation>
</comment>
<comment type="similarity">
    <text evidence="9">Belongs to the peptidase S8 family.</text>
</comment>
<name>SUB3_PSED2</name>
<gene>
    <name evidence="7" type="primary">SP3</name>
    <name type="ORF">GMDG_04447</name>
</gene>
<proteinExistence type="evidence at protein level"/>
<organism>
    <name type="scientific">Pseudogymnoascus destructans (strain ATCC MYA-4855 / 20631-21)</name>
    <name type="common">Bat white-nose syndrome fungus</name>
    <name type="synonym">Geomyces destructans</name>
    <dbReference type="NCBI Taxonomy" id="658429"/>
    <lineage>
        <taxon>Eukaryota</taxon>
        <taxon>Fungi</taxon>
        <taxon>Dikarya</taxon>
        <taxon>Ascomycota</taxon>
        <taxon>Pezizomycotina</taxon>
        <taxon>Leotiomycetes</taxon>
        <taxon>Thelebolales</taxon>
        <taxon>Thelebolaceae</taxon>
        <taxon>Pseudogymnoascus</taxon>
    </lineage>
</organism>
<accession>L8GD75</accession>
<feature type="signal peptide" evidence="3">
    <location>
        <begin position="1"/>
        <end position="20"/>
    </location>
</feature>
<feature type="propeptide" id="PRO_0000434140" evidence="1">
    <location>
        <begin position="21"/>
        <end position="114"/>
    </location>
</feature>
<feature type="chain" id="PRO_0000434141" description="Subtilisin-like protease 3">
    <location>
        <begin position="115"/>
        <end position="404"/>
    </location>
</feature>
<feature type="domain" description="Inhibitor I9" evidence="3">
    <location>
        <begin position="38"/>
        <end position="112"/>
    </location>
</feature>
<feature type="domain" description="Peptidase S8" evidence="5">
    <location>
        <begin position="123"/>
        <end position="404"/>
    </location>
</feature>
<feature type="active site" description="Charge relay system" evidence="5">
    <location>
        <position position="158"/>
    </location>
</feature>
<feature type="active site" description="Charge relay system" evidence="5">
    <location>
        <position position="190"/>
    </location>
</feature>
<feature type="active site" description="Charge relay system" evidence="5">
    <location>
        <position position="347"/>
    </location>
</feature>
<feature type="site" description="Cleavage; by autocatalysis" evidence="1">
    <location>
        <begin position="114"/>
        <end position="115"/>
    </location>
</feature>
<feature type="glycosylation site" description="N-linked (GlcNAc...) asparagine" evidence="4">
    <location>
        <position position="133"/>
    </location>
</feature>
<feature type="glycosylation site" description="N-linked (GlcNAc...) asparagine" evidence="4">
    <location>
        <position position="243"/>
    </location>
</feature>
<feature type="glycosylation site" description="N-linked (GlcNAc...) asparagine" evidence="4">
    <location>
        <position position="251"/>
    </location>
</feature>
<feature type="glycosylation site" description="N-linked (GlcNAc...) asparagine" evidence="4">
    <location>
        <position position="286"/>
    </location>
</feature>
<feature type="glycosylation site" description="N-linked (GlcNAc...) asparagine" evidence="4">
    <location>
        <position position="307"/>
    </location>
</feature>
<feature type="glycosylation site" description="N-linked (GlcNAc...) asparagine" evidence="4">
    <location>
        <position position="340"/>
    </location>
</feature>
<feature type="glycosylation site" description="N-linked (GlcNAc...) asparagine" evidence="4">
    <location>
        <position position="366"/>
    </location>
</feature>
<protein>
    <recommendedName>
        <fullName evidence="2">Subtilisin-like protease 3</fullName>
        <ecNumber evidence="1">3.4.21.-</ecNumber>
    </recommendedName>
    <alternativeName>
        <fullName evidence="8">Destructin-3</fullName>
    </alternativeName>
    <alternativeName>
        <fullName evidence="7">Serine protease 3</fullName>
        <shortName evidence="7">PdSP3</shortName>
    </alternativeName>
</protein>
<keyword id="KW-0325">Glycoprotein</keyword>
<keyword id="KW-0378">Hydrolase</keyword>
<keyword id="KW-0645">Protease</keyword>
<keyword id="KW-1185">Reference proteome</keyword>
<keyword id="KW-0964">Secreted</keyword>
<keyword id="KW-0720">Serine protease</keyword>
<keyword id="KW-0732">Signal</keyword>
<evidence type="ECO:0000250" key="1">
    <source>
        <dbReference type="UniProtKB" id="L8FSM5"/>
    </source>
</evidence>
<evidence type="ECO:0000250" key="2">
    <source>
        <dbReference type="UniProtKB" id="L8G6I7"/>
    </source>
</evidence>
<evidence type="ECO:0000255" key="3"/>
<evidence type="ECO:0000255" key="4">
    <source>
        <dbReference type="PROSITE-ProRule" id="PRU00498"/>
    </source>
</evidence>
<evidence type="ECO:0000255" key="5">
    <source>
        <dbReference type="PROSITE-ProRule" id="PRU01240"/>
    </source>
</evidence>
<evidence type="ECO:0000269" key="6">
    <source>
    </source>
</evidence>
<evidence type="ECO:0000303" key="7">
    <source>
    </source>
</evidence>
<evidence type="ECO:0000303" key="8">
    <source>
    </source>
</evidence>
<evidence type="ECO:0000305" key="9"/>
<sequence>MLFSKSLVALVACFLPLIVSATELKLRNAAATNVAADSYIVVYKDIDDSTFESEMFNVHSFLSKRDSTFRGLGHKYKMPKFKGYQIESDMDTVNRISQSPHVAYVDKDVKVSAYDLSVRIGAPWGLDRISHRNGTSPGLEEYTYDSSAGGGTTIYIIDTGVYIEHVEFEGRATFGANFIPGSPDTDEDGHGTHVAGIAAGANFGVASKAKIIAVRVLDANGDGKGSNVLAGMQWAADDAGKKNQTAKSVINMSLGADYSEAFNKATEAIIAKGIVVVAAAGNEDANASGVSPASTVDAITVGATDRNDSRAAFSNWGVALDVFAPGVDILSAWIGGKDANKTISGTSMACPHVAGLAAYFIGLEKNGTSTPSKIATKIKGVATKNVVLHPKNSRDNLAYNDDGY</sequence>